<reference key="1">
    <citation type="journal article" date="2003" name="Biochem. Pharmacol.">
        <title>Cloning and characterisation of the first drug-metabolising canine UDP-glucuronosyltransferase of the 2B subfamily.</title>
        <authorList>
            <person name="Soars M.G."/>
            <person name="Fettes M."/>
            <person name="O'Sullivan A.C."/>
            <person name="Riley R.J."/>
            <person name="Ethell B.T."/>
            <person name="Burchell B."/>
        </authorList>
    </citation>
    <scope>NUCLEOTIDE SEQUENCE [MRNA]</scope>
    <scope>CHARACTERIZATION</scope>
</reference>
<organism>
    <name type="scientific">Canis lupus familiaris</name>
    <name type="common">Dog</name>
    <name type="synonym">Canis familiaris</name>
    <dbReference type="NCBI Taxonomy" id="9615"/>
    <lineage>
        <taxon>Eukaryota</taxon>
        <taxon>Metazoa</taxon>
        <taxon>Chordata</taxon>
        <taxon>Craniata</taxon>
        <taxon>Vertebrata</taxon>
        <taxon>Euteleostomi</taxon>
        <taxon>Mammalia</taxon>
        <taxon>Eutheria</taxon>
        <taxon>Laurasiatheria</taxon>
        <taxon>Carnivora</taxon>
        <taxon>Caniformia</taxon>
        <taxon>Canidae</taxon>
        <taxon>Canis</taxon>
    </lineage>
</organism>
<accession>Q6K1J1</accession>
<sequence>MSMKWISVLLGLQLSCYFSSGSCGKVLVWPTEYSHWINVKTILDELVQRGHEVTVLTSSASILVDPNKLSAIKFEIYSAHLSRGDFEAFFIKLLNILIYDMPKDSFWTYFSLMQEFFWEFYECAQKLCKDVVLNKKLMTKLQESKFDLVLADTIIPCGELLAELLKIPLVYSLRFSPGYAFEKHSGGLPLPPSYVPVILSELTDQMTFMERVKNMLYVLYFDFWFQTINEKSWDQFYSEVLGRPTTLYELMRKADIWLIRTYWDFEYPHPLLPHFDFVGGLHCKPAKSLPTEMEEFVQSSGENGIVVFSLGSMVNNMTEERANVIASALAQIPQKVLWRFDGKKPDTLGPNTRLYKWLPQNDLLGHPKTKAFITHGGTNGIYEAIYHGIPMVGIPLFADQADNIVHMKAKGAAIRLDFSTMSSADLLNALRMVINDPSYKENAMKLSGIHHDQPIKPLDRAVFWIEYVMRHQGAKHLRPASHDLTWFQYHSLDVIGFLLACVATAIFVTTQCCLFCCRKVAKTGKKIKKE</sequence>
<feature type="signal peptide" evidence="2">
    <location>
        <begin position="1"/>
        <end position="24"/>
    </location>
</feature>
<feature type="chain" id="PRO_0000036048" description="UDP-glucuronosyltransferase 2B31">
    <location>
        <begin position="25"/>
        <end position="530"/>
    </location>
</feature>
<feature type="transmembrane region" description="Helical" evidence="2">
    <location>
        <begin position="495"/>
        <end position="515"/>
    </location>
</feature>
<feature type="modified residue" description="N6-succinyllysine" evidence="1">
    <location>
        <position position="136"/>
    </location>
</feature>
<feature type="glycosylation site" description="N-linked (GlcNAc...) asparagine" evidence="2">
    <location>
        <position position="316"/>
    </location>
</feature>
<keyword id="KW-0256">Endoplasmic reticulum</keyword>
<keyword id="KW-0325">Glycoprotein</keyword>
<keyword id="KW-0328">Glycosyltransferase</keyword>
<keyword id="KW-0472">Membrane</keyword>
<keyword id="KW-0492">Microsome</keyword>
<keyword id="KW-1185">Reference proteome</keyword>
<keyword id="KW-0732">Signal</keyword>
<keyword id="KW-0808">Transferase</keyword>
<keyword id="KW-0812">Transmembrane</keyword>
<keyword id="KW-1133">Transmembrane helix</keyword>
<gene>
    <name type="primary">UGT2B31</name>
</gene>
<name>UDB31_CANLF</name>
<dbReference type="EC" id="2.4.1.17"/>
<dbReference type="EMBL" id="AY135176">
    <property type="protein sequence ID" value="AAN10154.1"/>
    <property type="molecule type" value="mRNA"/>
</dbReference>
<dbReference type="RefSeq" id="NP_001003381.1">
    <property type="nucleotide sequence ID" value="NM_001003381.1"/>
</dbReference>
<dbReference type="SMR" id="Q6K1J1"/>
<dbReference type="STRING" id="9615.ENSCAFP00000033807"/>
<dbReference type="CAZy" id="GT1">
    <property type="family name" value="Glycosyltransferase Family 1"/>
</dbReference>
<dbReference type="GlyCosmos" id="Q6K1J1">
    <property type="glycosylation" value="1 site, No reported glycans"/>
</dbReference>
<dbReference type="PaxDb" id="9612-ENSCAFP00000021107"/>
<dbReference type="GeneID" id="442984"/>
<dbReference type="CTD" id="442984"/>
<dbReference type="eggNOG" id="KOG1192">
    <property type="taxonomic scope" value="Eukaryota"/>
</dbReference>
<dbReference type="InParanoid" id="Q6K1J1"/>
<dbReference type="OMA" id="GSHYIAM"/>
<dbReference type="OrthoDB" id="12989at33554"/>
<dbReference type="BRENDA" id="2.4.1.17">
    <property type="organism ID" value="1153"/>
</dbReference>
<dbReference type="SABIO-RK" id="Q6K1J1"/>
<dbReference type="Proteomes" id="UP000002254">
    <property type="component" value="Unplaced"/>
</dbReference>
<dbReference type="Proteomes" id="UP000694429">
    <property type="component" value="Unplaced"/>
</dbReference>
<dbReference type="Proteomes" id="UP000694542">
    <property type="component" value="Unplaced"/>
</dbReference>
<dbReference type="Proteomes" id="UP000805418">
    <property type="component" value="Unplaced"/>
</dbReference>
<dbReference type="GO" id="GO:0005789">
    <property type="term" value="C:endoplasmic reticulum membrane"/>
    <property type="evidence" value="ECO:0007669"/>
    <property type="project" value="UniProtKB-SubCell"/>
</dbReference>
<dbReference type="GO" id="GO:0015020">
    <property type="term" value="F:glucuronosyltransferase activity"/>
    <property type="evidence" value="ECO:0000318"/>
    <property type="project" value="GO_Central"/>
</dbReference>
<dbReference type="CDD" id="cd03784">
    <property type="entry name" value="GT1_Gtf-like"/>
    <property type="match status" value="1"/>
</dbReference>
<dbReference type="FunFam" id="3.40.50.2000:FF:000001">
    <property type="entry name" value="UDP-glucuronosyltransferase"/>
    <property type="match status" value="1"/>
</dbReference>
<dbReference type="FunFam" id="3.40.50.2000:FF:000081">
    <property type="entry name" value="UDP-glucuronosyltransferase 2A2"/>
    <property type="match status" value="1"/>
</dbReference>
<dbReference type="Gene3D" id="3.40.50.2000">
    <property type="entry name" value="Glycogen Phosphorylase B"/>
    <property type="match status" value="2"/>
</dbReference>
<dbReference type="InterPro" id="IPR050271">
    <property type="entry name" value="UDP-glycosyltransferase"/>
</dbReference>
<dbReference type="InterPro" id="IPR002213">
    <property type="entry name" value="UDP_glucos_trans"/>
</dbReference>
<dbReference type="InterPro" id="IPR035595">
    <property type="entry name" value="UDP_glycos_trans_CS"/>
</dbReference>
<dbReference type="PANTHER" id="PTHR48043">
    <property type="entry name" value="EG:EG0003.4 PROTEIN-RELATED"/>
    <property type="match status" value="1"/>
</dbReference>
<dbReference type="PANTHER" id="PTHR48043:SF12">
    <property type="entry name" value="UDP-GLUCURONOSYLTRANSFERASE 2B4"/>
    <property type="match status" value="1"/>
</dbReference>
<dbReference type="Pfam" id="PF00201">
    <property type="entry name" value="UDPGT"/>
    <property type="match status" value="1"/>
</dbReference>
<dbReference type="SUPFAM" id="SSF53756">
    <property type="entry name" value="UDP-Glycosyltransferase/glycogen phosphorylase"/>
    <property type="match status" value="1"/>
</dbReference>
<dbReference type="PROSITE" id="PS00375">
    <property type="entry name" value="UDPGT"/>
    <property type="match status" value="1"/>
</dbReference>
<proteinExistence type="evidence at protein level"/>
<evidence type="ECO:0000250" key="1">
    <source>
        <dbReference type="UniProtKB" id="Q8BWQ1"/>
    </source>
</evidence>
<evidence type="ECO:0000255" key="2"/>
<evidence type="ECO:0000305" key="3"/>
<protein>
    <recommendedName>
        <fullName>UDP-glucuronosyltransferase 2B31</fullName>
        <shortName>UDPGT 2B31</shortName>
        <ecNumber>2.4.1.17</ecNumber>
    </recommendedName>
</protein>
<comment type="function">
    <text>UDPGTs are of major importance in the conjugation and subsequent elimination of potentially toxic xenobiotics and endogenous compounds. This isozyme has glucuronidating capacity on phenols, opioids, and carboxylic acid-containing drugs.</text>
</comment>
<comment type="catalytic activity">
    <reaction>
        <text>glucuronate acceptor + UDP-alpha-D-glucuronate = acceptor beta-D-glucuronoside + UDP + H(+)</text>
        <dbReference type="Rhea" id="RHEA:21032"/>
        <dbReference type="ChEBI" id="CHEBI:15378"/>
        <dbReference type="ChEBI" id="CHEBI:58052"/>
        <dbReference type="ChEBI" id="CHEBI:58223"/>
        <dbReference type="ChEBI" id="CHEBI:132367"/>
        <dbReference type="ChEBI" id="CHEBI:132368"/>
        <dbReference type="EC" id="2.4.1.17"/>
    </reaction>
</comment>
<comment type="subcellular location">
    <subcellularLocation>
        <location evidence="3">Microsome membrane</location>
        <topology evidence="3">Single-pass membrane protein</topology>
    </subcellularLocation>
    <subcellularLocation>
        <location evidence="3">Endoplasmic reticulum membrane</location>
        <topology evidence="3">Single-pass membrane protein</topology>
    </subcellularLocation>
</comment>
<comment type="similarity">
    <text evidence="3">Belongs to the UDP-glycosyltransferase family.</text>
</comment>